<evidence type="ECO:0000250" key="1"/>
<evidence type="ECO:0000250" key="2">
    <source>
        <dbReference type="UniProtKB" id="Q9BSM1"/>
    </source>
</evidence>
<evidence type="ECO:0000255" key="3">
    <source>
        <dbReference type="PROSITE-ProRule" id="PRU00175"/>
    </source>
</evidence>
<evidence type="ECO:0000269" key="4">
    <source>
    </source>
</evidence>
<gene>
    <name type="primary">Pcgf1</name>
    <name type="synonym">Nspc1</name>
</gene>
<sequence>MRLRNQLQSVYKMDPLRNEEEVRVKIKDLNEHIVCCLCAGYFVDATTITECLHTFCKSCIVKYLQTSKYCPMCNIKIHETQPLLNLKLDRVMQDIVYKLVPGLQDSEEKRIRDFYQSRGLDRVSQPSGEEPALRGLGLPFTSFDHYYRYDEQLSLCLERLSSGKDKNKNVLQNKYVRCSVRAEVRHLRRVLCHRLMLNPQHVQLLFDNEVLPDHMTMKQLWLSRWFGKPSPLLLQYSVKEKRR</sequence>
<proteinExistence type="evidence at transcript level"/>
<organism>
    <name type="scientific">Rattus norvegicus</name>
    <name type="common">Rat</name>
    <dbReference type="NCBI Taxonomy" id="10116"/>
    <lineage>
        <taxon>Eukaryota</taxon>
        <taxon>Metazoa</taxon>
        <taxon>Chordata</taxon>
        <taxon>Craniata</taxon>
        <taxon>Vertebrata</taxon>
        <taxon>Euteleostomi</taxon>
        <taxon>Mammalia</taxon>
        <taxon>Eutheria</taxon>
        <taxon>Euarchontoglires</taxon>
        <taxon>Glires</taxon>
        <taxon>Rodentia</taxon>
        <taxon>Myomorpha</taxon>
        <taxon>Muroidea</taxon>
        <taxon>Muridae</taxon>
        <taxon>Murinae</taxon>
        <taxon>Rattus</taxon>
    </lineage>
</organism>
<feature type="chain" id="PRO_0000277857" description="Polycomb group RING finger protein 1">
    <location>
        <begin position="1" status="less than"/>
        <end position="243"/>
    </location>
</feature>
<feature type="zinc finger region" description="RING-type" evidence="3">
    <location>
        <begin position="35"/>
        <end position="74"/>
    </location>
</feature>
<feature type="region of interest" description="Necessary for repressor activity" evidence="1">
    <location>
        <begin position="74"/>
        <end position="231"/>
    </location>
</feature>
<feature type="region of interest" description="Required for the interaction with the KDM2B-SKP1 heterodimeric complex" evidence="2">
    <location>
        <begin position="138"/>
        <end position="239"/>
    </location>
</feature>
<feature type="region of interest" description="RING-finger and WD40-associated ubiquitin-like domain (RAWUL); sufficient for interaction with BCOR and BCORL1" evidence="2">
    <location>
        <begin position="151"/>
        <end position="239"/>
    </location>
</feature>
<feature type="cross-link" description="Glycyl lysine isopeptide (Lys-Gly) (interchain with G-Cter in SUMO2)" evidence="2">
    <location>
        <position position="12"/>
    </location>
</feature>
<feature type="cross-link" description="Glycyl lysine isopeptide (Lys-Gly) (interchain with G-Cter in SUMO2)" evidence="2">
    <location>
        <position position="76"/>
    </location>
</feature>
<feature type="non-terminal residue">
    <location>
        <position position="1"/>
    </location>
</feature>
<name>PCGF1_RAT</name>
<keyword id="KW-1017">Isopeptide bond</keyword>
<keyword id="KW-0479">Metal-binding</keyword>
<keyword id="KW-0539">Nucleus</keyword>
<keyword id="KW-1185">Reference proteome</keyword>
<keyword id="KW-0678">Repressor</keyword>
<keyword id="KW-0804">Transcription</keyword>
<keyword id="KW-0805">Transcription regulation</keyword>
<keyword id="KW-0832">Ubl conjugation</keyword>
<keyword id="KW-0862">Zinc</keyword>
<keyword id="KW-0863">Zinc-finger</keyword>
<accession>Q6DLV9</accession>
<reference key="1">
    <citation type="submission" date="2004-06" db="EMBL/GenBank/DDBJ databases">
        <title>Rattus norvegicus similar to Nspc1 protein full length cDNA.</title>
        <authorList>
            <person name="Gong Y."/>
            <person name="Wang X."/>
            <person name="Yuan J."/>
        </authorList>
    </citation>
    <scope>NUCLEOTIDE SEQUENCE [MRNA]</scope>
</reference>
<reference key="2">
    <citation type="journal article" date="2005" name="FEBS Lett.">
        <title>NSPc1, a mainly nuclear localized protein of novel PcG family members, has a transcription repression activity related to its PKC phosphorylation site at S183.</title>
        <authorList>
            <person name="Gong Y."/>
            <person name="Wang X."/>
            <person name="Liu J."/>
            <person name="Shi L."/>
            <person name="Yin B."/>
            <person name="Peng X."/>
            <person name="Qiang B."/>
            <person name="Yuan J."/>
        </authorList>
    </citation>
    <scope>TISSUE SPECIFICITY</scope>
</reference>
<protein>
    <recommendedName>
        <fullName>Polycomb group RING finger protein 1</fullName>
    </recommendedName>
    <alternativeName>
        <fullName>Nervous system Polycomb-1</fullName>
        <shortName>NSPc1</shortName>
    </alternativeName>
</protein>
<dbReference type="EMBL" id="AY662670">
    <property type="protein sequence ID" value="AAT74859.1"/>
    <property type="molecule type" value="mRNA"/>
</dbReference>
<dbReference type="RefSeq" id="NP_001007001.1">
    <property type="nucleotide sequence ID" value="NM_001007000.1"/>
</dbReference>
<dbReference type="SMR" id="Q6DLV9"/>
<dbReference type="STRING" id="10116.ENSRNOP00000011173"/>
<dbReference type="PhosphoSitePlus" id="Q6DLV9"/>
<dbReference type="PaxDb" id="10116-ENSRNOP00000011173"/>
<dbReference type="GeneID" id="312480"/>
<dbReference type="KEGG" id="rno:312480"/>
<dbReference type="UCSC" id="RGD:1549782">
    <property type="organism name" value="rat"/>
</dbReference>
<dbReference type="AGR" id="RGD:1549782"/>
<dbReference type="CTD" id="84759"/>
<dbReference type="RGD" id="1549782">
    <property type="gene designation" value="Pcgf1"/>
</dbReference>
<dbReference type="eggNOG" id="KOG2660">
    <property type="taxonomic scope" value="Eukaryota"/>
</dbReference>
<dbReference type="InParanoid" id="Q6DLV9"/>
<dbReference type="PhylomeDB" id="Q6DLV9"/>
<dbReference type="Proteomes" id="UP000002494">
    <property type="component" value="Unplaced"/>
</dbReference>
<dbReference type="GO" id="GO:0005634">
    <property type="term" value="C:nucleus"/>
    <property type="evidence" value="ECO:0000266"/>
    <property type="project" value="RGD"/>
</dbReference>
<dbReference type="GO" id="GO:0031519">
    <property type="term" value="C:PcG protein complex"/>
    <property type="evidence" value="ECO:0000250"/>
    <property type="project" value="UniProtKB"/>
</dbReference>
<dbReference type="GO" id="GO:0035102">
    <property type="term" value="C:PRC1 complex"/>
    <property type="evidence" value="ECO:0000318"/>
    <property type="project" value="GO_Central"/>
</dbReference>
<dbReference type="GO" id="GO:1990841">
    <property type="term" value="F:promoter-specific chromatin binding"/>
    <property type="evidence" value="ECO:0000318"/>
    <property type="project" value="GO_Central"/>
</dbReference>
<dbReference type="GO" id="GO:0008270">
    <property type="term" value="F:zinc ion binding"/>
    <property type="evidence" value="ECO:0007669"/>
    <property type="project" value="UniProtKB-KW"/>
</dbReference>
<dbReference type="GO" id="GO:0006338">
    <property type="term" value="P:chromatin remodeling"/>
    <property type="evidence" value="ECO:0000250"/>
    <property type="project" value="UniProtKB"/>
</dbReference>
<dbReference type="GO" id="GO:0000122">
    <property type="term" value="P:negative regulation of transcription by RNA polymerase II"/>
    <property type="evidence" value="ECO:0000318"/>
    <property type="project" value="GO_Central"/>
</dbReference>
<dbReference type="CDD" id="cd17081">
    <property type="entry name" value="RAWUL_PCGF1"/>
    <property type="match status" value="1"/>
</dbReference>
<dbReference type="CDD" id="cd16733">
    <property type="entry name" value="RING-HC_PCGF1"/>
    <property type="match status" value="1"/>
</dbReference>
<dbReference type="FunFam" id="3.10.20.90:FF:000099">
    <property type="entry name" value="Polycomb group RING finger protein 1"/>
    <property type="match status" value="1"/>
</dbReference>
<dbReference type="FunFam" id="3.30.40.10:FF:000122">
    <property type="entry name" value="polycomb group RING finger protein 1"/>
    <property type="match status" value="1"/>
</dbReference>
<dbReference type="Gene3D" id="3.10.20.90">
    <property type="entry name" value="Phosphatidylinositol 3-kinase Catalytic Subunit, Chain A, domain 1"/>
    <property type="match status" value="1"/>
</dbReference>
<dbReference type="Gene3D" id="3.30.40.10">
    <property type="entry name" value="Zinc/RING finger domain, C3HC4 (zinc finger)"/>
    <property type="match status" value="1"/>
</dbReference>
<dbReference type="InterPro" id="IPR032443">
    <property type="entry name" value="RAWUL"/>
</dbReference>
<dbReference type="InterPro" id="IPR001841">
    <property type="entry name" value="Znf_RING"/>
</dbReference>
<dbReference type="InterPro" id="IPR013083">
    <property type="entry name" value="Znf_RING/FYVE/PHD"/>
</dbReference>
<dbReference type="InterPro" id="IPR017907">
    <property type="entry name" value="Znf_RING_CS"/>
</dbReference>
<dbReference type="PANTHER" id="PTHR10825:SF29">
    <property type="entry name" value="POLYCOMB GROUP RING FINGER PROTEIN 1"/>
    <property type="match status" value="1"/>
</dbReference>
<dbReference type="PANTHER" id="PTHR10825">
    <property type="entry name" value="RING FINGER DOMAIN-CONTAINING, POLYCOMB GROUP COMPONENT"/>
    <property type="match status" value="1"/>
</dbReference>
<dbReference type="Pfam" id="PF16207">
    <property type="entry name" value="RAWUL"/>
    <property type="match status" value="1"/>
</dbReference>
<dbReference type="Pfam" id="PF13923">
    <property type="entry name" value="zf-C3HC4_2"/>
    <property type="match status" value="1"/>
</dbReference>
<dbReference type="SMART" id="SM00184">
    <property type="entry name" value="RING"/>
    <property type="match status" value="1"/>
</dbReference>
<dbReference type="SUPFAM" id="SSF57850">
    <property type="entry name" value="RING/U-box"/>
    <property type="match status" value="1"/>
</dbReference>
<dbReference type="PROSITE" id="PS00518">
    <property type="entry name" value="ZF_RING_1"/>
    <property type="match status" value="1"/>
</dbReference>
<dbReference type="PROSITE" id="PS50089">
    <property type="entry name" value="ZF_RING_2"/>
    <property type="match status" value="1"/>
</dbReference>
<comment type="function">
    <text evidence="2">Component of the Polycomb group (PcG) multiprotein BCOR complex, a complex required to maintain the transcriptionally repressive state of some genes, such as BCL6 and the cyclin-dependent kinase inhibitor, CDKN1A. Transcriptional repressor that may be targeted to the DNA by BCL6; this transcription repressor activity may be related to PKC signaling pathway. Represses CDKN1A expression by binding to its promoter, and this repression is dependent on the retinoic acid response element (RARE element). Promotes cell cycle progression and enhances cell proliferation as well. May have a positive role in tumor cell growth by down-regulating CDKN1A. Component of a Polycomb group (PcG) multiprotein PRC1-like complex, a complex class required to maintain the transcriptionally repressive state of many genes, including Hox genes, throughout development. PcG PRC1 complex acts via chromatin remodeling and modification of histones; it mediates monoubiquitination of histone H2A 'Lys-119', rendering chromatin heritably changed in its expressibility. Within the PRC1-like complex, regulates RNF2 ubiquitin ligase activity. Regulates the expression of DPPA4 and NANOG in the NT2 embryonic carcinoma cells.</text>
</comment>
<comment type="subunit">
    <text evidence="2">Interacts with BCORL1, forming heterodimers (By similarity). The PCGF1-BCORL1 heterodimeric complex interacts with the KDM2B-SKP1 heterodimeric complex to form a homotetrameric polycomb repression complex 1 (PRC1.1) (By similarity). Component of the repressive BCOR complex containing a Polycomb group subcomplex at least composed of RYBP, RING1 and RNF2/RING2 (By similarity). Specifically interacts with BCOR, RING1 and RNF2/RING2 (By similarity). Component of a PRC1-like complex (By similarity). Interacts with CBX6, CBX7 and CBX8 (By similarity). Interacts with DPPA4, NANOG, POU5F1 and RYBP (By similarity).</text>
</comment>
<comment type="subcellular location">
    <subcellularLocation>
        <location evidence="2">Nucleus</location>
    </subcellularLocation>
</comment>
<comment type="tissue specificity">
    <text evidence="4">Highly expressed in brain, cerebellum, heart and testis.</text>
</comment>